<gene>
    <name evidence="1" type="primary">hprK</name>
    <name type="ordered locus">CTC_01010</name>
</gene>
<evidence type="ECO:0000255" key="1">
    <source>
        <dbReference type="HAMAP-Rule" id="MF_01249"/>
    </source>
</evidence>
<organism>
    <name type="scientific">Clostridium tetani (strain Massachusetts / E88)</name>
    <dbReference type="NCBI Taxonomy" id="212717"/>
    <lineage>
        <taxon>Bacteria</taxon>
        <taxon>Bacillati</taxon>
        <taxon>Bacillota</taxon>
        <taxon>Clostridia</taxon>
        <taxon>Eubacteriales</taxon>
        <taxon>Clostridiaceae</taxon>
        <taxon>Clostridium</taxon>
    </lineage>
</organism>
<feature type="chain" id="PRO_0000058954" description="HPr kinase/phosphorylase">
    <location>
        <begin position="1"/>
        <end position="305"/>
    </location>
</feature>
<feature type="region of interest" description="Important for the catalytic mechanism of both phosphorylation and dephosphorylation" evidence="1">
    <location>
        <begin position="198"/>
        <end position="207"/>
    </location>
</feature>
<feature type="region of interest" description="Important for the catalytic mechanism of dephosphorylation" evidence="1">
    <location>
        <begin position="261"/>
        <end position="266"/>
    </location>
</feature>
<feature type="active site" evidence="1">
    <location>
        <position position="136"/>
    </location>
</feature>
<feature type="active site" evidence="1">
    <location>
        <position position="157"/>
    </location>
</feature>
<feature type="active site" description="Proton acceptor; for phosphorylation activity. Proton donor; for dephosphorylation activity" evidence="1">
    <location>
        <position position="175"/>
    </location>
</feature>
<feature type="active site" evidence="1">
    <location>
        <position position="240"/>
    </location>
</feature>
<feature type="binding site" evidence="1">
    <location>
        <begin position="151"/>
        <end position="158"/>
    </location>
    <ligand>
        <name>ATP</name>
        <dbReference type="ChEBI" id="CHEBI:30616"/>
    </ligand>
</feature>
<feature type="binding site" evidence="1">
    <location>
        <position position="158"/>
    </location>
    <ligand>
        <name>Mg(2+)</name>
        <dbReference type="ChEBI" id="CHEBI:18420"/>
    </ligand>
</feature>
<feature type="binding site" evidence="1">
    <location>
        <position position="199"/>
    </location>
    <ligand>
        <name>Mg(2+)</name>
        <dbReference type="ChEBI" id="CHEBI:18420"/>
    </ligand>
</feature>
<proteinExistence type="inferred from homology"/>
<name>HPRK_CLOTE</name>
<sequence>MGVLVKNLVEDLKLEVLNKGKDDIELNISDINRPGLQFSGFYNYFANERVQLIGKTEWSFLDVMSPELRKKRVAKFFQFETPCVIITRNLKPHKEVLENSRKYNRWLLNTSNISTRFTSKLMNYLDEKLAPETRLHGVLVDVYGIGILITGESGIGKSETALELIKRGHRLVADDAVDIKEIEGKLIGSSPYVTSGMLEVRGLGIIDVPSLYGLSSVLDIKTIGVIIHLEQWKKDQDYDRLGIDEINRDILNVPVRKITLPIRPGRNIAVIIEAAAANYRYNLNSNSSPVDTIGARMKEENLKNK</sequence>
<accession>Q896J4</accession>
<dbReference type="EC" id="2.7.11.-" evidence="1"/>
<dbReference type="EC" id="2.7.4.-" evidence="1"/>
<dbReference type="EMBL" id="AE015927">
    <property type="protein sequence ID" value="AAO35596.1"/>
    <property type="molecule type" value="Genomic_DNA"/>
</dbReference>
<dbReference type="RefSeq" id="WP_011099258.1">
    <property type="nucleotide sequence ID" value="NC_004557.1"/>
</dbReference>
<dbReference type="SMR" id="Q896J4"/>
<dbReference type="STRING" id="212717.CTC_01010"/>
<dbReference type="GeneID" id="24253423"/>
<dbReference type="KEGG" id="ctc:CTC_01010"/>
<dbReference type="HOGENOM" id="CLU_052030_0_1_9"/>
<dbReference type="OrthoDB" id="9778803at2"/>
<dbReference type="Proteomes" id="UP000001412">
    <property type="component" value="Chromosome"/>
</dbReference>
<dbReference type="GO" id="GO:0005524">
    <property type="term" value="F:ATP binding"/>
    <property type="evidence" value="ECO:0007669"/>
    <property type="project" value="UniProtKB-UniRule"/>
</dbReference>
<dbReference type="GO" id="GO:0000287">
    <property type="term" value="F:magnesium ion binding"/>
    <property type="evidence" value="ECO:0007669"/>
    <property type="project" value="UniProtKB-UniRule"/>
</dbReference>
<dbReference type="GO" id="GO:0000155">
    <property type="term" value="F:phosphorelay sensor kinase activity"/>
    <property type="evidence" value="ECO:0007669"/>
    <property type="project" value="InterPro"/>
</dbReference>
<dbReference type="GO" id="GO:0004674">
    <property type="term" value="F:protein serine/threonine kinase activity"/>
    <property type="evidence" value="ECO:0007669"/>
    <property type="project" value="UniProtKB-KW"/>
</dbReference>
<dbReference type="GO" id="GO:0004712">
    <property type="term" value="F:protein serine/threonine/tyrosine kinase activity"/>
    <property type="evidence" value="ECO:0007669"/>
    <property type="project" value="UniProtKB-UniRule"/>
</dbReference>
<dbReference type="GO" id="GO:0006109">
    <property type="term" value="P:regulation of carbohydrate metabolic process"/>
    <property type="evidence" value="ECO:0007669"/>
    <property type="project" value="UniProtKB-UniRule"/>
</dbReference>
<dbReference type="CDD" id="cd01918">
    <property type="entry name" value="HprK_C"/>
    <property type="match status" value="1"/>
</dbReference>
<dbReference type="FunFam" id="3.40.50.300:FF:000174">
    <property type="entry name" value="HPr kinase/phosphorylase"/>
    <property type="match status" value="1"/>
</dbReference>
<dbReference type="Gene3D" id="3.40.1390.20">
    <property type="entry name" value="HprK N-terminal domain-like"/>
    <property type="match status" value="1"/>
</dbReference>
<dbReference type="Gene3D" id="3.40.50.300">
    <property type="entry name" value="P-loop containing nucleotide triphosphate hydrolases"/>
    <property type="match status" value="1"/>
</dbReference>
<dbReference type="HAMAP" id="MF_01249">
    <property type="entry name" value="HPr_kinase"/>
    <property type="match status" value="1"/>
</dbReference>
<dbReference type="InterPro" id="IPR003755">
    <property type="entry name" value="HPr(Ser)_kin/Pase"/>
</dbReference>
<dbReference type="InterPro" id="IPR011104">
    <property type="entry name" value="Hpr_kin/Pase_C"/>
</dbReference>
<dbReference type="InterPro" id="IPR011126">
    <property type="entry name" value="Hpr_kin/Pase_Hpr_N"/>
</dbReference>
<dbReference type="InterPro" id="IPR027417">
    <property type="entry name" value="P-loop_NTPase"/>
</dbReference>
<dbReference type="InterPro" id="IPR028979">
    <property type="entry name" value="Ser_kin/Pase_Hpr-like_N_sf"/>
</dbReference>
<dbReference type="NCBIfam" id="TIGR00679">
    <property type="entry name" value="hpr-ser"/>
    <property type="match status" value="1"/>
</dbReference>
<dbReference type="PANTHER" id="PTHR30305:SF1">
    <property type="entry name" value="HPR KINASE_PHOSPHORYLASE"/>
    <property type="match status" value="1"/>
</dbReference>
<dbReference type="PANTHER" id="PTHR30305">
    <property type="entry name" value="PROTEIN YJDM-RELATED"/>
    <property type="match status" value="1"/>
</dbReference>
<dbReference type="Pfam" id="PF07475">
    <property type="entry name" value="Hpr_kinase_C"/>
    <property type="match status" value="1"/>
</dbReference>
<dbReference type="Pfam" id="PF02603">
    <property type="entry name" value="Hpr_kinase_N"/>
    <property type="match status" value="1"/>
</dbReference>
<dbReference type="SUPFAM" id="SSF75138">
    <property type="entry name" value="HprK N-terminal domain-like"/>
    <property type="match status" value="1"/>
</dbReference>
<dbReference type="SUPFAM" id="SSF53795">
    <property type="entry name" value="PEP carboxykinase-like"/>
    <property type="match status" value="1"/>
</dbReference>
<reference key="1">
    <citation type="journal article" date="2003" name="Proc. Natl. Acad. Sci. U.S.A.">
        <title>The genome sequence of Clostridium tetani, the causative agent of tetanus disease.</title>
        <authorList>
            <person name="Brueggemann H."/>
            <person name="Baeumer S."/>
            <person name="Fricke W.F."/>
            <person name="Wiezer A."/>
            <person name="Liesegang H."/>
            <person name="Decker I."/>
            <person name="Herzberg C."/>
            <person name="Martinez-Arias R."/>
            <person name="Merkl R."/>
            <person name="Henne A."/>
            <person name="Gottschalk G."/>
        </authorList>
    </citation>
    <scope>NUCLEOTIDE SEQUENCE [LARGE SCALE GENOMIC DNA]</scope>
    <source>
        <strain>Massachusetts / E88</strain>
    </source>
</reference>
<protein>
    <recommendedName>
        <fullName evidence="1">HPr kinase/phosphorylase</fullName>
        <shortName evidence="1">HPrK/P</shortName>
        <ecNumber evidence="1">2.7.11.-</ecNumber>
        <ecNumber evidence="1">2.7.4.-</ecNumber>
    </recommendedName>
    <alternativeName>
        <fullName evidence="1">HPr(Ser) kinase/phosphorylase</fullName>
    </alternativeName>
</protein>
<keyword id="KW-0067">ATP-binding</keyword>
<keyword id="KW-0119">Carbohydrate metabolism</keyword>
<keyword id="KW-0418">Kinase</keyword>
<keyword id="KW-0460">Magnesium</keyword>
<keyword id="KW-0479">Metal-binding</keyword>
<keyword id="KW-0511">Multifunctional enzyme</keyword>
<keyword id="KW-0547">Nucleotide-binding</keyword>
<keyword id="KW-1185">Reference proteome</keyword>
<keyword id="KW-0723">Serine/threonine-protein kinase</keyword>
<keyword id="KW-0808">Transferase</keyword>
<comment type="function">
    <text evidence="1">Catalyzes the ATP- as well as the pyrophosphate-dependent phosphorylation of a specific serine residue in HPr, a phosphocarrier protein of the phosphoenolpyruvate-dependent sugar phosphotransferase system (PTS). HprK/P also catalyzes the pyrophosphate-producing, inorganic phosphate-dependent dephosphorylation (phosphorolysis) of seryl-phosphorylated HPr (P-Ser-HPr). The two antagonistic activities of HprK/P are regulated by several intracellular metabolites, which change their concentration in response to the absence or presence of rapidly metabolisable carbon sources (glucose, fructose, etc.) in the growth medium. Therefore, by controlling the phosphorylation state of HPr, HPrK/P is a sensor enzyme that plays a major role in the regulation of carbon metabolism and sugar transport: it mediates carbon catabolite repression (CCR), and regulates PTS-catalyzed carbohydrate uptake and inducer exclusion.</text>
</comment>
<comment type="catalytic activity">
    <reaction evidence="1">
        <text>[HPr protein]-L-serine + ATP = [HPr protein]-O-phospho-L-serine + ADP + H(+)</text>
        <dbReference type="Rhea" id="RHEA:46600"/>
        <dbReference type="Rhea" id="RHEA-COMP:11602"/>
        <dbReference type="Rhea" id="RHEA-COMP:11603"/>
        <dbReference type="ChEBI" id="CHEBI:15378"/>
        <dbReference type="ChEBI" id="CHEBI:29999"/>
        <dbReference type="ChEBI" id="CHEBI:30616"/>
        <dbReference type="ChEBI" id="CHEBI:83421"/>
        <dbReference type="ChEBI" id="CHEBI:456216"/>
    </reaction>
</comment>
<comment type="catalytic activity">
    <reaction evidence="1">
        <text>[HPr protein]-O-phospho-L-serine + phosphate + H(+) = [HPr protein]-L-serine + diphosphate</text>
        <dbReference type="Rhea" id="RHEA:46604"/>
        <dbReference type="Rhea" id="RHEA-COMP:11602"/>
        <dbReference type="Rhea" id="RHEA-COMP:11603"/>
        <dbReference type="ChEBI" id="CHEBI:15378"/>
        <dbReference type="ChEBI" id="CHEBI:29999"/>
        <dbReference type="ChEBI" id="CHEBI:33019"/>
        <dbReference type="ChEBI" id="CHEBI:43474"/>
        <dbReference type="ChEBI" id="CHEBI:83421"/>
    </reaction>
</comment>
<comment type="cofactor">
    <cofactor evidence="1">
        <name>Mg(2+)</name>
        <dbReference type="ChEBI" id="CHEBI:18420"/>
    </cofactor>
</comment>
<comment type="subunit">
    <text evidence="1">Homohexamer.</text>
</comment>
<comment type="domain">
    <text evidence="1">The Walker A ATP-binding motif also binds Pi and PPi.</text>
</comment>
<comment type="miscellaneous">
    <text evidence="1">Both phosphorylation and phosphorolysis are carried out by the same active site and suggest a common mechanism for both reactions.</text>
</comment>
<comment type="similarity">
    <text evidence="1">Belongs to the HPrK/P family.</text>
</comment>